<proteinExistence type="evidence at protein level"/>
<dbReference type="EMBL" id="AJ278477">
    <property type="protein sequence ID" value="CAC14266.1"/>
    <property type="molecule type" value="mRNA"/>
</dbReference>
<dbReference type="EMBL" id="AJ278477">
    <property type="protein sequence ID" value="CAC14265.1"/>
    <property type="status" value="ALT_INIT"/>
    <property type="molecule type" value="mRNA"/>
</dbReference>
<dbReference type="RefSeq" id="NP_001002931.1">
    <property type="nucleotide sequence ID" value="NM_001002931.1"/>
</dbReference>
<dbReference type="RefSeq" id="XP_038509294.1">
    <property type="nucleotide sequence ID" value="XM_038653366.1"/>
</dbReference>
<dbReference type="SMR" id="Q9GL25"/>
<dbReference type="STRING" id="9615.ENSCAFP00000006026"/>
<dbReference type="PaxDb" id="9612-ENSCAFP00000032923"/>
<dbReference type="GeneID" id="399530"/>
<dbReference type="KEGG" id="cfa:399530"/>
<dbReference type="CTD" id="64100"/>
<dbReference type="eggNOG" id="KOG1565">
    <property type="taxonomic scope" value="Eukaryota"/>
</dbReference>
<dbReference type="InParanoid" id="Q9GL25"/>
<dbReference type="OrthoDB" id="406838at2759"/>
<dbReference type="Proteomes" id="UP000002254">
    <property type="component" value="Unplaced"/>
</dbReference>
<dbReference type="Proteomes" id="UP000694429">
    <property type="component" value="Unplaced"/>
</dbReference>
<dbReference type="Proteomes" id="UP000694542">
    <property type="component" value="Unplaced"/>
</dbReference>
<dbReference type="Proteomes" id="UP000805418">
    <property type="component" value="Unplaced"/>
</dbReference>
<dbReference type="GO" id="GO:0009986">
    <property type="term" value="C:cell surface"/>
    <property type="evidence" value="ECO:0000318"/>
    <property type="project" value="GO_Central"/>
</dbReference>
<dbReference type="GO" id="GO:0005576">
    <property type="term" value="C:extracellular region"/>
    <property type="evidence" value="ECO:0007669"/>
    <property type="project" value="UniProtKB-SubCell"/>
</dbReference>
<dbReference type="GO" id="GO:0008201">
    <property type="term" value="F:heparin binding"/>
    <property type="evidence" value="ECO:0000318"/>
    <property type="project" value="GO_Central"/>
</dbReference>
<dbReference type="GO" id="GO:0007338">
    <property type="term" value="P:single fertilization"/>
    <property type="evidence" value="ECO:0007669"/>
    <property type="project" value="UniProtKB-KW"/>
</dbReference>
<dbReference type="GO" id="GO:0048240">
    <property type="term" value="P:sperm capacitation"/>
    <property type="evidence" value="ECO:0000318"/>
    <property type="project" value="GO_Central"/>
</dbReference>
<dbReference type="CDD" id="cd00062">
    <property type="entry name" value="FN2"/>
    <property type="match status" value="3"/>
</dbReference>
<dbReference type="FunFam" id="2.10.10.10:FF:000003">
    <property type="entry name" value="binder of sperm protein homolog 1"/>
    <property type="match status" value="1"/>
</dbReference>
<dbReference type="FunFam" id="2.10.10.10:FF:000005">
    <property type="entry name" value="Epididymal sperm binding protein 1"/>
    <property type="match status" value="1"/>
</dbReference>
<dbReference type="FunFam" id="2.10.10.10:FF:000008">
    <property type="entry name" value="Epididymal sperm-binding protein 1"/>
    <property type="match status" value="1"/>
</dbReference>
<dbReference type="FunFam" id="2.10.10.10:FF:000009">
    <property type="entry name" value="Epididymal sperm-binding protein 1"/>
    <property type="match status" value="1"/>
</dbReference>
<dbReference type="Gene3D" id="2.10.10.10">
    <property type="entry name" value="Fibronectin, type II, collagen-binding"/>
    <property type="match status" value="4"/>
</dbReference>
<dbReference type="InterPro" id="IPR000562">
    <property type="entry name" value="FN_type2_dom"/>
</dbReference>
<dbReference type="InterPro" id="IPR036943">
    <property type="entry name" value="FN_type2_sf"/>
</dbReference>
<dbReference type="InterPro" id="IPR013806">
    <property type="entry name" value="Kringle-like"/>
</dbReference>
<dbReference type="InterPro" id="IPR051666">
    <property type="entry name" value="SP_Capacitation_Regulator"/>
</dbReference>
<dbReference type="PANTHER" id="PTHR22918">
    <property type="entry name" value="SEMINAL PLASMA PROTEIN"/>
    <property type="match status" value="1"/>
</dbReference>
<dbReference type="PANTHER" id="PTHR22918:SF3">
    <property type="entry name" value="SEMINAL PLASMA PROTEIN HSP-1"/>
    <property type="match status" value="1"/>
</dbReference>
<dbReference type="Pfam" id="PF00040">
    <property type="entry name" value="fn2"/>
    <property type="match status" value="4"/>
</dbReference>
<dbReference type="PRINTS" id="PR00013">
    <property type="entry name" value="FNTYPEII"/>
</dbReference>
<dbReference type="SMART" id="SM00059">
    <property type="entry name" value="FN2"/>
    <property type="match status" value="4"/>
</dbReference>
<dbReference type="SUPFAM" id="SSF57440">
    <property type="entry name" value="Kringle-like"/>
    <property type="match status" value="4"/>
</dbReference>
<dbReference type="PROSITE" id="PS00023">
    <property type="entry name" value="FN2_1"/>
    <property type="match status" value="2"/>
</dbReference>
<dbReference type="PROSITE" id="PS51092">
    <property type="entry name" value="FN2_2"/>
    <property type="match status" value="4"/>
</dbReference>
<keyword id="KW-1015">Disulfide bond</keyword>
<keyword id="KW-0278">Fertilization</keyword>
<keyword id="KW-1185">Reference proteome</keyword>
<keyword id="KW-0677">Repeat</keyword>
<keyword id="KW-0964">Secreted</keyword>
<keyword id="KW-0732">Signal</keyword>
<feature type="signal peptide" evidence="2">
    <location>
        <begin position="1"/>
        <end position="23"/>
    </location>
</feature>
<feature type="chain" id="PRO_0000308248" description="Epididymal sperm-binding protein 1">
    <location>
        <begin position="24"/>
        <end position="245"/>
    </location>
</feature>
<feature type="domain" description="Fibronectin type-II 1" evidence="3">
    <location>
        <begin position="46"/>
        <end position="90"/>
    </location>
</feature>
<feature type="domain" description="Fibronectin type-II 2" evidence="3">
    <location>
        <begin position="91"/>
        <end position="139"/>
    </location>
</feature>
<feature type="domain" description="Fibronectin type-II 3" evidence="3">
    <location>
        <begin position="146"/>
        <end position="192"/>
    </location>
</feature>
<feature type="domain" description="Fibronectin type-II 4" evidence="3">
    <location>
        <begin position="199"/>
        <end position="245"/>
    </location>
</feature>
<feature type="disulfide bond" evidence="3">
    <location>
        <begin position="51"/>
        <end position="75"/>
    </location>
</feature>
<feature type="disulfide bond" evidence="3">
    <location>
        <begin position="65"/>
        <end position="88"/>
    </location>
</feature>
<feature type="disulfide bond" evidence="3">
    <location>
        <begin position="96"/>
        <end position="122"/>
    </location>
</feature>
<feature type="disulfide bond" evidence="3">
    <location>
        <begin position="110"/>
        <end position="137"/>
    </location>
</feature>
<feature type="disulfide bond" evidence="3">
    <location>
        <begin position="151"/>
        <end position="175"/>
    </location>
</feature>
<feature type="disulfide bond" evidence="3">
    <location>
        <begin position="165"/>
        <end position="190"/>
    </location>
</feature>
<feature type="disulfide bond" evidence="3">
    <location>
        <begin position="204"/>
        <end position="230"/>
    </location>
</feature>
<feature type="disulfide bond" evidence="3">
    <location>
        <begin position="218"/>
        <end position="245"/>
    </location>
</feature>
<organism>
    <name type="scientific">Canis lupus familiaris</name>
    <name type="common">Dog</name>
    <name type="synonym">Canis familiaris</name>
    <dbReference type="NCBI Taxonomy" id="9615"/>
    <lineage>
        <taxon>Eukaryota</taxon>
        <taxon>Metazoa</taxon>
        <taxon>Chordata</taxon>
        <taxon>Craniata</taxon>
        <taxon>Vertebrata</taxon>
        <taxon>Euteleostomi</taxon>
        <taxon>Mammalia</taxon>
        <taxon>Eutheria</taxon>
        <taxon>Laurasiatheria</taxon>
        <taxon>Carnivora</taxon>
        <taxon>Caniformia</taxon>
        <taxon>Canidae</taxon>
        <taxon>Canis</taxon>
    </lineage>
</organism>
<reference key="1">
    <citation type="journal article" date="2001" name="Mol. Reprod. Dev.">
        <title>Novel sperm-binding proteins of epididymal origin contain four fibronectin type II-modules.</title>
        <authorList>
            <person name="Saalmann A."/>
            <person name="Muenz S."/>
            <person name="Ellerbrock K."/>
            <person name="Ivell R."/>
            <person name="Kirchhoff C."/>
        </authorList>
    </citation>
    <scope>NUCLEOTIDE SEQUENCE [MRNA]</scope>
    <scope>SUBCELLULAR LOCATION</scope>
    <scope>TISSUE SPECIFICITY</scope>
</reference>
<gene>
    <name type="primary">ELSPBP1</name>
    <name type="synonym">E12</name>
</gene>
<name>ESPB1_CANLF</name>
<comment type="function">
    <text evidence="1">Binds to spermatozoa upon ejaculation and may play a role in sperm capacitation. Has phosphorylcholine-binding activity (By similarity).</text>
</comment>
<comment type="subcellular location">
    <subcellularLocation>
        <location evidence="4">Secreted</location>
    </subcellularLocation>
</comment>
<comment type="tissue specificity">
    <text evidence="4">Detected in epididymal duct epithelium, cauda epididymidal fluid and on sperm membrane (at protein level).</text>
</comment>
<comment type="similarity">
    <text evidence="5">Belongs to the seminal plasma protein family.</text>
</comment>
<comment type="sequence caution" evidence="5">
    <conflict type="erroneous initiation">
        <sequence resource="EMBL-CDS" id="CAC14265"/>
    </conflict>
</comment>
<sequence length="245" mass="28746">MNPWSSYLLGWTTFLLYFYETSGKIPNLSSLGKHEFTKPWISIKEDQKDSCVFPFVYKGSSYFSCIKTNSFSPWCATRAVYNGQWKFCMADDYPRCIFPFIFRGKSHNSCITEGSFLRRLWCSVTSSFDENQQWKYCETNEYGGNSFSKPCIFPSIFRNSTIFECMEDENNKLWCPTTENMDEDGKWSLCADTRISSLVPGFPCHFPFSYKNKNYYNCIGKGTKENLTWCATSYNYDRDHTWVYC</sequence>
<protein>
    <recommendedName>
        <fullName>Epididymal sperm-binding protein 1</fullName>
    </recommendedName>
    <alternativeName>
        <fullName>CeE12</fullName>
    </alternativeName>
    <alternativeName>
        <fullName>E12a</fullName>
    </alternativeName>
    <alternativeName>
        <fullName>Epididymal secretory protein 12</fullName>
    </alternativeName>
</protein>
<accession>Q9GL25</accession>
<accession>Q9GL26</accession>
<evidence type="ECO:0000250" key="1"/>
<evidence type="ECO:0000255" key="2"/>
<evidence type="ECO:0000255" key="3">
    <source>
        <dbReference type="PROSITE-ProRule" id="PRU00479"/>
    </source>
</evidence>
<evidence type="ECO:0000269" key="4">
    <source>
    </source>
</evidence>
<evidence type="ECO:0000305" key="5"/>